<evidence type="ECO:0000255" key="1">
    <source>
        <dbReference type="HAMAP-Rule" id="MF_01852"/>
    </source>
</evidence>
<comment type="function">
    <text evidence="1">Required for the formation of a threonylcarbamoyl group on adenosine at position 37 (t(6)A37) in tRNAs that read codons beginning with adenine. Catalyzes the conversion of L-threonine, HCO(3)(-)/CO(2) and ATP to give threonylcarbamoyl-AMP (TC-AMP) as the acyladenylate intermediate, with the release of diphosphate.</text>
</comment>
<comment type="catalytic activity">
    <reaction evidence="1">
        <text>L-threonine + hydrogencarbonate + ATP = L-threonylcarbamoyladenylate + diphosphate + H2O</text>
        <dbReference type="Rhea" id="RHEA:36407"/>
        <dbReference type="ChEBI" id="CHEBI:15377"/>
        <dbReference type="ChEBI" id="CHEBI:17544"/>
        <dbReference type="ChEBI" id="CHEBI:30616"/>
        <dbReference type="ChEBI" id="CHEBI:33019"/>
        <dbReference type="ChEBI" id="CHEBI:57926"/>
        <dbReference type="ChEBI" id="CHEBI:73682"/>
        <dbReference type="EC" id="2.7.7.87"/>
    </reaction>
</comment>
<comment type="subcellular location">
    <subcellularLocation>
        <location evidence="1">Cytoplasm</location>
    </subcellularLocation>
</comment>
<comment type="similarity">
    <text evidence="1">Belongs to the SUA5 family. TsaC subfamily.</text>
</comment>
<organism>
    <name type="scientific">Escherichia coli (strain SMS-3-5 / SECEC)</name>
    <dbReference type="NCBI Taxonomy" id="439855"/>
    <lineage>
        <taxon>Bacteria</taxon>
        <taxon>Pseudomonadati</taxon>
        <taxon>Pseudomonadota</taxon>
        <taxon>Gammaproteobacteria</taxon>
        <taxon>Enterobacterales</taxon>
        <taxon>Enterobacteriaceae</taxon>
        <taxon>Escherichia</taxon>
    </lineage>
</organism>
<gene>
    <name evidence="1" type="primary">tsaC</name>
    <name type="synonym">rimN</name>
    <name type="ordered locus">EcSMS35_3578</name>
</gene>
<feature type="chain" id="PRO_0000352914" description="Threonylcarbamoyl-AMP synthase">
    <location>
        <begin position="1"/>
        <end position="190"/>
    </location>
</feature>
<feature type="domain" description="YrdC-like" evidence="1">
    <location>
        <begin position="7"/>
        <end position="190"/>
    </location>
</feature>
<protein>
    <recommendedName>
        <fullName evidence="1">Threonylcarbamoyl-AMP synthase</fullName>
        <shortName evidence="1">TC-AMP synthase</shortName>
        <ecNumber evidence="1">2.7.7.87</ecNumber>
    </recommendedName>
    <alternativeName>
        <fullName evidence="1">L-threonylcarbamoyladenylate synthase</fullName>
    </alternativeName>
    <alternativeName>
        <fullName evidence="1">t(6)A37 threonylcarbamoyladenosine biosynthesis protein TsaC</fullName>
    </alternativeName>
    <alternativeName>
        <fullName evidence="1">tRNA threonylcarbamoyladenosine biosynthesis protein TsaC</fullName>
    </alternativeName>
</protein>
<proteinExistence type="inferred from homology"/>
<name>TSAC_ECOSM</name>
<accession>B1LGN9</accession>
<reference key="1">
    <citation type="journal article" date="2008" name="J. Bacteriol.">
        <title>Insights into the environmental resistance gene pool from the genome sequence of the multidrug-resistant environmental isolate Escherichia coli SMS-3-5.</title>
        <authorList>
            <person name="Fricke W.F."/>
            <person name="Wright M.S."/>
            <person name="Lindell A.H."/>
            <person name="Harkins D.M."/>
            <person name="Baker-Austin C."/>
            <person name="Ravel J."/>
            <person name="Stepanauskas R."/>
        </authorList>
    </citation>
    <scope>NUCLEOTIDE SEQUENCE [LARGE SCALE GENOMIC DNA]</scope>
    <source>
        <strain>SMS-3-5 / SECEC</strain>
    </source>
</reference>
<keyword id="KW-0067">ATP-binding</keyword>
<keyword id="KW-0963">Cytoplasm</keyword>
<keyword id="KW-0547">Nucleotide-binding</keyword>
<keyword id="KW-0548">Nucleotidyltransferase</keyword>
<keyword id="KW-0808">Transferase</keyword>
<keyword id="KW-0819">tRNA processing</keyword>
<dbReference type="EC" id="2.7.7.87" evidence="1"/>
<dbReference type="EMBL" id="CP000970">
    <property type="protein sequence ID" value="ACB19250.1"/>
    <property type="molecule type" value="Genomic_DNA"/>
</dbReference>
<dbReference type="RefSeq" id="WP_001297709.1">
    <property type="nucleotide sequence ID" value="NC_010498.1"/>
</dbReference>
<dbReference type="SMR" id="B1LGN9"/>
<dbReference type="GeneID" id="75204135"/>
<dbReference type="KEGG" id="ecm:EcSMS35_3578"/>
<dbReference type="HOGENOM" id="CLU_031397_6_0_6"/>
<dbReference type="Proteomes" id="UP000007011">
    <property type="component" value="Chromosome"/>
</dbReference>
<dbReference type="GO" id="GO:0005737">
    <property type="term" value="C:cytoplasm"/>
    <property type="evidence" value="ECO:0007669"/>
    <property type="project" value="UniProtKB-SubCell"/>
</dbReference>
<dbReference type="GO" id="GO:0005524">
    <property type="term" value="F:ATP binding"/>
    <property type="evidence" value="ECO:0007669"/>
    <property type="project" value="UniProtKB-UniRule"/>
</dbReference>
<dbReference type="GO" id="GO:0003725">
    <property type="term" value="F:double-stranded RNA binding"/>
    <property type="evidence" value="ECO:0007669"/>
    <property type="project" value="InterPro"/>
</dbReference>
<dbReference type="GO" id="GO:0061710">
    <property type="term" value="F:L-threonylcarbamoyladenylate synthase"/>
    <property type="evidence" value="ECO:0007669"/>
    <property type="project" value="UniProtKB-EC"/>
</dbReference>
<dbReference type="GO" id="GO:0000049">
    <property type="term" value="F:tRNA binding"/>
    <property type="evidence" value="ECO:0007669"/>
    <property type="project" value="TreeGrafter"/>
</dbReference>
<dbReference type="GO" id="GO:0006450">
    <property type="term" value="P:regulation of translational fidelity"/>
    <property type="evidence" value="ECO:0007669"/>
    <property type="project" value="TreeGrafter"/>
</dbReference>
<dbReference type="GO" id="GO:0002949">
    <property type="term" value="P:tRNA threonylcarbamoyladenosine modification"/>
    <property type="evidence" value="ECO:0007669"/>
    <property type="project" value="UniProtKB-UniRule"/>
</dbReference>
<dbReference type="FunFam" id="3.90.870.10:FF:000004">
    <property type="entry name" value="Threonylcarbamoyl-AMP synthase"/>
    <property type="match status" value="1"/>
</dbReference>
<dbReference type="Gene3D" id="3.90.870.10">
    <property type="entry name" value="DHBP synthase"/>
    <property type="match status" value="1"/>
</dbReference>
<dbReference type="HAMAP" id="MF_01852">
    <property type="entry name" value="TsaC"/>
    <property type="match status" value="1"/>
</dbReference>
<dbReference type="InterPro" id="IPR017945">
    <property type="entry name" value="DHBP_synth_RibB-like_a/b_dom"/>
</dbReference>
<dbReference type="InterPro" id="IPR006070">
    <property type="entry name" value="Sua5-like_dom"/>
</dbReference>
<dbReference type="InterPro" id="IPR023535">
    <property type="entry name" value="TC-AMP_synthase"/>
</dbReference>
<dbReference type="InterPro" id="IPR050156">
    <property type="entry name" value="TC-AMP_synthase_SUA5"/>
</dbReference>
<dbReference type="NCBIfam" id="NF007919">
    <property type="entry name" value="PRK10634.1"/>
    <property type="match status" value="1"/>
</dbReference>
<dbReference type="PANTHER" id="PTHR17490">
    <property type="entry name" value="SUA5"/>
    <property type="match status" value="1"/>
</dbReference>
<dbReference type="PANTHER" id="PTHR17490:SF18">
    <property type="entry name" value="THREONYLCARBAMOYL-AMP SYNTHASE"/>
    <property type="match status" value="1"/>
</dbReference>
<dbReference type="Pfam" id="PF01300">
    <property type="entry name" value="Sua5_yciO_yrdC"/>
    <property type="match status" value="1"/>
</dbReference>
<dbReference type="SUPFAM" id="SSF55821">
    <property type="entry name" value="YrdC/RibB"/>
    <property type="match status" value="1"/>
</dbReference>
<dbReference type="PROSITE" id="PS51163">
    <property type="entry name" value="YRDC"/>
    <property type="match status" value="1"/>
</dbReference>
<sequence>MNNNLQGDAIAAAIDVLNEERVIAYPTEAVFGVGCDPDSETAVMRLLELKQRPVDKGLILIAANYEQLKPYIDDTMLTDAQRETIFSRWPGPVTFVFPAPATTPRWLTGRFDSLAVRVTDHPLVVALCQAYGKPLVSTSANLSGLPPCRTVDEVRAQFGAAFPVVPGETGGRLNPSEIRDALTGELFRQG</sequence>